<keyword id="KW-0030">Aminoacyl-tRNA synthetase</keyword>
<keyword id="KW-0067">ATP-binding</keyword>
<keyword id="KW-0963">Cytoplasm</keyword>
<keyword id="KW-0436">Ligase</keyword>
<keyword id="KW-0547">Nucleotide-binding</keyword>
<keyword id="KW-0648">Protein biosynthesis</keyword>
<keyword id="KW-1185">Reference proteome</keyword>
<organism>
    <name type="scientific">Sulfolobus acidocaldarius (strain ATCC 33909 / DSM 639 / JCM 8929 / NBRC 15157 / NCIMB 11770)</name>
    <dbReference type="NCBI Taxonomy" id="330779"/>
    <lineage>
        <taxon>Archaea</taxon>
        <taxon>Thermoproteota</taxon>
        <taxon>Thermoprotei</taxon>
        <taxon>Sulfolobales</taxon>
        <taxon>Sulfolobaceae</taxon>
        <taxon>Sulfolobus</taxon>
    </lineage>
</organism>
<name>SYY_SULAC</name>
<dbReference type="EC" id="6.1.1.1" evidence="1"/>
<dbReference type="EMBL" id="CP000077">
    <property type="protein sequence ID" value="AAY79503.1"/>
    <property type="molecule type" value="Genomic_DNA"/>
</dbReference>
<dbReference type="RefSeq" id="WP_011277004.1">
    <property type="nucleotide sequence ID" value="NC_007181.1"/>
</dbReference>
<dbReference type="SMR" id="Q4JCH6"/>
<dbReference type="STRING" id="330779.Saci_0076"/>
<dbReference type="GeneID" id="14550606"/>
<dbReference type="KEGG" id="sai:Saci_0076"/>
<dbReference type="PATRIC" id="fig|330779.12.peg.70"/>
<dbReference type="eggNOG" id="arCOG01886">
    <property type="taxonomic scope" value="Archaea"/>
</dbReference>
<dbReference type="HOGENOM" id="CLU_035267_1_1_2"/>
<dbReference type="Proteomes" id="UP000001018">
    <property type="component" value="Chromosome"/>
</dbReference>
<dbReference type="GO" id="GO:0005737">
    <property type="term" value="C:cytoplasm"/>
    <property type="evidence" value="ECO:0007669"/>
    <property type="project" value="UniProtKB-SubCell"/>
</dbReference>
<dbReference type="GO" id="GO:0005524">
    <property type="term" value="F:ATP binding"/>
    <property type="evidence" value="ECO:0007669"/>
    <property type="project" value="UniProtKB-UniRule"/>
</dbReference>
<dbReference type="GO" id="GO:0004831">
    <property type="term" value="F:tyrosine-tRNA ligase activity"/>
    <property type="evidence" value="ECO:0007669"/>
    <property type="project" value="UniProtKB-UniRule"/>
</dbReference>
<dbReference type="GO" id="GO:0006437">
    <property type="term" value="P:tyrosyl-tRNA aminoacylation"/>
    <property type="evidence" value="ECO:0007669"/>
    <property type="project" value="UniProtKB-UniRule"/>
</dbReference>
<dbReference type="CDD" id="cd00805">
    <property type="entry name" value="TyrRS_core"/>
    <property type="match status" value="1"/>
</dbReference>
<dbReference type="Gene3D" id="3.40.50.620">
    <property type="entry name" value="HUPs"/>
    <property type="match status" value="1"/>
</dbReference>
<dbReference type="Gene3D" id="1.10.240.10">
    <property type="entry name" value="Tyrosyl-Transfer RNA Synthetase"/>
    <property type="match status" value="1"/>
</dbReference>
<dbReference type="HAMAP" id="MF_02009">
    <property type="entry name" value="Tyr_tRNA_synth_type4"/>
    <property type="match status" value="1"/>
</dbReference>
<dbReference type="InterPro" id="IPR002305">
    <property type="entry name" value="aa-tRNA-synth_Ic"/>
</dbReference>
<dbReference type="InterPro" id="IPR014729">
    <property type="entry name" value="Rossmann-like_a/b/a_fold"/>
</dbReference>
<dbReference type="InterPro" id="IPR002307">
    <property type="entry name" value="Tyr-tRNA-ligase"/>
</dbReference>
<dbReference type="InterPro" id="IPR023678">
    <property type="entry name" value="Tyr-tRNA-ligase_4"/>
</dbReference>
<dbReference type="InterPro" id="IPR023617">
    <property type="entry name" value="Tyr-tRNA-ligase_arc/euk-type"/>
</dbReference>
<dbReference type="InterPro" id="IPR050489">
    <property type="entry name" value="Tyr-tRNA_synthase"/>
</dbReference>
<dbReference type="NCBIfam" id="NF006330">
    <property type="entry name" value="PRK08560.1"/>
    <property type="match status" value="1"/>
</dbReference>
<dbReference type="NCBIfam" id="TIGR00234">
    <property type="entry name" value="tyrS"/>
    <property type="match status" value="1"/>
</dbReference>
<dbReference type="PANTHER" id="PTHR46264:SF4">
    <property type="entry name" value="TYROSINE--TRNA LIGASE, CYTOPLASMIC"/>
    <property type="match status" value="1"/>
</dbReference>
<dbReference type="PANTHER" id="PTHR46264">
    <property type="entry name" value="TYROSINE-TRNA LIGASE"/>
    <property type="match status" value="1"/>
</dbReference>
<dbReference type="Pfam" id="PF00579">
    <property type="entry name" value="tRNA-synt_1b"/>
    <property type="match status" value="2"/>
</dbReference>
<dbReference type="PIRSF" id="PIRSF006588">
    <property type="entry name" value="TyrRS_arch_euk"/>
    <property type="match status" value="1"/>
</dbReference>
<dbReference type="PRINTS" id="PR01040">
    <property type="entry name" value="TRNASYNTHTYR"/>
</dbReference>
<dbReference type="SUPFAM" id="SSF52374">
    <property type="entry name" value="Nucleotidylyl transferase"/>
    <property type="match status" value="1"/>
</dbReference>
<gene>
    <name evidence="1" type="primary">tyrS</name>
    <name type="ordered locus">Saci_0076</name>
</gene>
<sequence length="361" mass="40848">MNIDEKIKLITRNTDEVITIDELKKKLEENSKLKGYIGFEPSGLFHIGWLIWAQKLKDLIKAGVDMSILVATWHAMINDKLGGDLEKIKLAGKYALEVLEGFGVDMSKLKVVYAEDLVENIDYWSLVVKVAKNTSLARMKRALTIMGRRSEEAELDTSKLIYPAMQVSDIFFQDLDIALGGTDQRKAHMLARDVAEKLQRKKVIAIHTPLLVGLQGGQRMNTEGLEEDDYLATIKMSKSKPETAIFIHDSPELVESKLKNSYCPKGVVNDNPVLQINKYIIFGEQGVTLKIERDTKYGGDIEIKSYEELERIFIEGKLHPLDLKLATARKLNDILDPIRKRISSKSQFVDLISSIEKSITR</sequence>
<comment type="function">
    <text evidence="1">Catalyzes the attachment of tyrosine to tRNA(Tyr) in a two-step reaction: tyrosine is first activated by ATP to form Tyr-AMP and then transferred to the acceptor end of tRNA(Tyr).</text>
</comment>
<comment type="catalytic activity">
    <reaction evidence="1">
        <text>tRNA(Tyr) + L-tyrosine + ATP = L-tyrosyl-tRNA(Tyr) + AMP + diphosphate + H(+)</text>
        <dbReference type="Rhea" id="RHEA:10220"/>
        <dbReference type="Rhea" id="RHEA-COMP:9706"/>
        <dbReference type="Rhea" id="RHEA-COMP:9707"/>
        <dbReference type="ChEBI" id="CHEBI:15378"/>
        <dbReference type="ChEBI" id="CHEBI:30616"/>
        <dbReference type="ChEBI" id="CHEBI:33019"/>
        <dbReference type="ChEBI" id="CHEBI:58315"/>
        <dbReference type="ChEBI" id="CHEBI:78442"/>
        <dbReference type="ChEBI" id="CHEBI:78536"/>
        <dbReference type="ChEBI" id="CHEBI:456215"/>
        <dbReference type="EC" id="6.1.1.1"/>
    </reaction>
</comment>
<comment type="subunit">
    <text evidence="1">Homodimer.</text>
</comment>
<comment type="subcellular location">
    <subcellularLocation>
        <location evidence="1">Cytoplasm</location>
    </subcellularLocation>
</comment>
<comment type="similarity">
    <text evidence="1">Belongs to the class-I aminoacyl-tRNA synthetase family. TyrS type 4 subfamily.</text>
</comment>
<feature type="chain" id="PRO_0000240271" description="Tyrosine--tRNA ligase">
    <location>
        <begin position="1"/>
        <end position="361"/>
    </location>
</feature>
<feature type="short sequence motif" description="'KMSKS' region">
    <location>
        <begin position="235"/>
        <end position="239"/>
    </location>
</feature>
<feature type="binding site" evidence="1">
    <location>
        <position position="36"/>
    </location>
    <ligand>
        <name>L-tyrosine</name>
        <dbReference type="ChEBI" id="CHEBI:58315"/>
    </ligand>
</feature>
<feature type="binding site" evidence="1">
    <location>
        <position position="162"/>
    </location>
    <ligand>
        <name>L-tyrosine</name>
        <dbReference type="ChEBI" id="CHEBI:58315"/>
    </ligand>
</feature>
<feature type="binding site" evidence="1">
    <location>
        <position position="166"/>
    </location>
    <ligand>
        <name>L-tyrosine</name>
        <dbReference type="ChEBI" id="CHEBI:58315"/>
    </ligand>
</feature>
<feature type="binding site" evidence="1">
    <location>
        <position position="169"/>
    </location>
    <ligand>
        <name>L-tyrosine</name>
        <dbReference type="ChEBI" id="CHEBI:58315"/>
    </ligand>
</feature>
<feature type="binding site" evidence="1">
    <location>
        <position position="184"/>
    </location>
    <ligand>
        <name>L-tyrosine</name>
        <dbReference type="ChEBI" id="CHEBI:58315"/>
    </ligand>
</feature>
<feature type="binding site" evidence="1">
    <location>
        <position position="238"/>
    </location>
    <ligand>
        <name>ATP</name>
        <dbReference type="ChEBI" id="CHEBI:30616"/>
    </ligand>
</feature>
<evidence type="ECO:0000255" key="1">
    <source>
        <dbReference type="HAMAP-Rule" id="MF_02009"/>
    </source>
</evidence>
<reference key="1">
    <citation type="journal article" date="2005" name="J. Bacteriol.">
        <title>The genome of Sulfolobus acidocaldarius, a model organism of the Crenarchaeota.</title>
        <authorList>
            <person name="Chen L."/>
            <person name="Bruegger K."/>
            <person name="Skovgaard M."/>
            <person name="Redder P."/>
            <person name="She Q."/>
            <person name="Torarinsson E."/>
            <person name="Greve B."/>
            <person name="Awayez M."/>
            <person name="Zibat A."/>
            <person name="Klenk H.-P."/>
            <person name="Garrett R.A."/>
        </authorList>
    </citation>
    <scope>NUCLEOTIDE SEQUENCE [LARGE SCALE GENOMIC DNA]</scope>
    <source>
        <strain>ATCC 33909 / DSM 639 / JCM 8929 / NBRC 15157 / NCIMB 11770</strain>
    </source>
</reference>
<accession>Q4JCH6</accession>
<protein>
    <recommendedName>
        <fullName evidence="1">Tyrosine--tRNA ligase</fullName>
        <ecNumber evidence="1">6.1.1.1</ecNumber>
    </recommendedName>
    <alternativeName>
        <fullName evidence="1">Tyrosyl-tRNA synthetase</fullName>
        <shortName evidence="1">TyrRS</shortName>
    </alternativeName>
</protein>
<proteinExistence type="inferred from homology"/>